<comment type="function">
    <text evidence="4 5">Component of the large ribosomal subunit (PubMed:26245381, PubMed:27863242). The ribosome is a large ribonucleoprotein complex responsible for the synthesis of proteins in the cell (PubMed:26245381, PubMed:27863242).</text>
</comment>
<comment type="subunit">
    <text evidence="4 5 6 7 8 9 10 11 12 13">Component of the large ribosomal subunit.</text>
</comment>
<comment type="subcellular location">
    <subcellularLocation>
        <location evidence="1">Cytoplasm</location>
        <location evidence="1">Cytosol</location>
    </subcellularLocation>
    <subcellularLocation>
        <location evidence="4 5 6 7 8 9 10 11 12 13">Cytoplasm</location>
    </subcellularLocation>
    <subcellularLocation>
        <location evidence="2">Endoplasmic reticulum</location>
    </subcellularLocation>
    <text evidence="1 2">Detected on cytosolic polysomes (By similarity). Detected in ribosomes that are associated with the rough endoplasmic reticulum (By similarity).</text>
</comment>
<comment type="similarity">
    <text evidence="14">Belongs to the eukaryotic ribosomal protein eL34 family.</text>
</comment>
<keyword id="KW-0002">3D-structure</keyword>
<keyword id="KW-0007">Acetylation</keyword>
<keyword id="KW-0963">Cytoplasm</keyword>
<keyword id="KW-0256">Endoplasmic reticulum</keyword>
<keyword id="KW-1017">Isopeptide bond</keyword>
<keyword id="KW-0597">Phosphoprotein</keyword>
<keyword id="KW-1185">Reference proteome</keyword>
<keyword id="KW-0687">Ribonucleoprotein</keyword>
<keyword id="KW-0689">Ribosomal protein</keyword>
<keyword id="KW-0832">Ubl conjugation</keyword>
<organism>
    <name type="scientific">Oryctolagus cuniculus</name>
    <name type="common">Rabbit</name>
    <dbReference type="NCBI Taxonomy" id="9986"/>
    <lineage>
        <taxon>Eukaryota</taxon>
        <taxon>Metazoa</taxon>
        <taxon>Chordata</taxon>
        <taxon>Craniata</taxon>
        <taxon>Vertebrata</taxon>
        <taxon>Euteleostomi</taxon>
        <taxon>Mammalia</taxon>
        <taxon>Eutheria</taxon>
        <taxon>Euarchontoglires</taxon>
        <taxon>Glires</taxon>
        <taxon>Lagomorpha</taxon>
        <taxon>Leporidae</taxon>
        <taxon>Oryctolagus</taxon>
    </lineage>
</organism>
<sequence length="117" mass="13293">MVQRLTYRRRLSYNTASNKTRLSRTPGNRIVYLYTKKVGKAPKSACGVCPGRLRGVRAVRPKVLMRLSKTKKHVSRAYGGSMCAKCVRDRIKRAFLIEEQKIVVKVLKAQAQSQKAK</sequence>
<gene>
    <name type="primary">RPL34</name>
</gene>
<dbReference type="EMBL" id="AAGW02048901">
    <property type="status" value="NOT_ANNOTATED_CDS"/>
    <property type="molecule type" value="Genomic_DNA"/>
</dbReference>
<dbReference type="EMBL" id="AAGW02023856">
    <property type="status" value="NOT_ANNOTATED_CDS"/>
    <property type="molecule type" value="Genomic_DNA"/>
</dbReference>
<dbReference type="RefSeq" id="XP_002718179.1">
    <property type="nucleotide sequence ID" value="XM_002718133.3"/>
</dbReference>
<dbReference type="RefSeq" id="XP_051676085.1">
    <property type="nucleotide sequence ID" value="XM_051820125.2"/>
</dbReference>
<dbReference type="RefSeq" id="XP_069903872.1">
    <property type="nucleotide sequence ID" value="XM_070047771.1"/>
</dbReference>
<dbReference type="RefSeq" id="XP_069903874.1">
    <property type="nucleotide sequence ID" value="XM_070047773.1"/>
</dbReference>
<dbReference type="PDB" id="3JAG">
    <property type="method" value="EM"/>
    <property type="resolution" value="3.65 A"/>
    <property type="chains" value="g=1-117"/>
</dbReference>
<dbReference type="PDB" id="3JAH">
    <property type="method" value="EM"/>
    <property type="resolution" value="3.45 A"/>
    <property type="chains" value="g=1-117"/>
</dbReference>
<dbReference type="PDB" id="3JAI">
    <property type="method" value="EM"/>
    <property type="resolution" value="3.65 A"/>
    <property type="chains" value="g=1-117"/>
</dbReference>
<dbReference type="PDB" id="5LZS">
    <property type="method" value="EM"/>
    <property type="resolution" value="3.31 A"/>
    <property type="chains" value="g=1-117"/>
</dbReference>
<dbReference type="PDB" id="5LZT">
    <property type="method" value="EM"/>
    <property type="resolution" value="3.65 A"/>
    <property type="chains" value="g=1-117"/>
</dbReference>
<dbReference type="PDB" id="5LZU">
    <property type="method" value="EM"/>
    <property type="resolution" value="3.75 A"/>
    <property type="chains" value="g=1-117"/>
</dbReference>
<dbReference type="PDB" id="5LZV">
    <property type="method" value="EM"/>
    <property type="resolution" value="3.35 A"/>
    <property type="chains" value="g=1-117"/>
</dbReference>
<dbReference type="PDB" id="5LZW">
    <property type="method" value="EM"/>
    <property type="resolution" value="3.53 A"/>
    <property type="chains" value="g=1-117"/>
</dbReference>
<dbReference type="PDB" id="6D90">
    <property type="method" value="EM"/>
    <property type="resolution" value="3.20 A"/>
    <property type="chains" value="g=1-117"/>
</dbReference>
<dbReference type="PDB" id="6D9J">
    <property type="method" value="EM"/>
    <property type="resolution" value="3.20 A"/>
    <property type="chains" value="g=1-117"/>
</dbReference>
<dbReference type="PDB" id="6FTG">
    <property type="method" value="EM"/>
    <property type="resolution" value="9.10 A"/>
    <property type="chains" value="g=1-117"/>
</dbReference>
<dbReference type="PDB" id="6FTI">
    <property type="method" value="EM"/>
    <property type="resolution" value="4.20 A"/>
    <property type="chains" value="g=1-117"/>
</dbReference>
<dbReference type="PDB" id="6FTJ">
    <property type="method" value="EM"/>
    <property type="resolution" value="4.70 A"/>
    <property type="chains" value="g=1-117"/>
</dbReference>
<dbReference type="PDB" id="6P5I">
    <property type="method" value="EM"/>
    <property type="resolution" value="3.10 A"/>
    <property type="chains" value="Ag=1-117"/>
</dbReference>
<dbReference type="PDB" id="6P5J">
    <property type="method" value="EM"/>
    <property type="resolution" value="3.10 A"/>
    <property type="chains" value="Ag=1-117"/>
</dbReference>
<dbReference type="PDB" id="6P5K">
    <property type="method" value="EM"/>
    <property type="resolution" value="3.10 A"/>
    <property type="chains" value="Ag=1-117"/>
</dbReference>
<dbReference type="PDB" id="6P5N">
    <property type="method" value="EM"/>
    <property type="resolution" value="3.20 A"/>
    <property type="chains" value="Ag=1-117"/>
</dbReference>
<dbReference type="PDB" id="6R5Q">
    <property type="method" value="EM"/>
    <property type="resolution" value="3.00 A"/>
    <property type="chains" value="g=1-117"/>
</dbReference>
<dbReference type="PDB" id="6R6G">
    <property type="method" value="EM"/>
    <property type="resolution" value="3.70 A"/>
    <property type="chains" value="g=1-117"/>
</dbReference>
<dbReference type="PDB" id="6R6P">
    <property type="method" value="EM"/>
    <property type="resolution" value="3.10 A"/>
    <property type="chains" value="g=1-117"/>
</dbReference>
<dbReference type="PDB" id="6R7Q">
    <property type="method" value="EM"/>
    <property type="resolution" value="3.90 A"/>
    <property type="chains" value="g=1-117"/>
</dbReference>
<dbReference type="PDB" id="6SGC">
    <property type="method" value="EM"/>
    <property type="resolution" value="2.80 A"/>
    <property type="chains" value="g2=1-117"/>
</dbReference>
<dbReference type="PDB" id="6T59">
    <property type="method" value="EM"/>
    <property type="resolution" value="3.11 A"/>
    <property type="chains" value="g3=1-117"/>
</dbReference>
<dbReference type="PDB" id="6ZVK">
    <property type="method" value="EM"/>
    <property type="resolution" value="3.49 A"/>
    <property type="chains" value="y2=1-117"/>
</dbReference>
<dbReference type="PDB" id="7A01">
    <property type="method" value="EM"/>
    <property type="resolution" value="3.60 A"/>
    <property type="chains" value="y2=1-117"/>
</dbReference>
<dbReference type="PDB" id="7MDZ">
    <property type="method" value="EM"/>
    <property type="resolution" value="3.20 A"/>
    <property type="chains" value="g=1-117"/>
</dbReference>
<dbReference type="PDB" id="7NFX">
    <property type="method" value="EM"/>
    <property type="resolution" value="3.20 A"/>
    <property type="chains" value="g=1-117"/>
</dbReference>
<dbReference type="PDB" id="7NWG">
    <property type="method" value="EM"/>
    <property type="resolution" value="3.80 A"/>
    <property type="chains" value="g3=1-117"/>
</dbReference>
<dbReference type="PDB" id="7NWH">
    <property type="method" value="EM"/>
    <property type="resolution" value="4.10 A"/>
    <property type="chains" value="g=1-117"/>
</dbReference>
<dbReference type="PDB" id="7NWI">
    <property type="method" value="EM"/>
    <property type="resolution" value="3.13 A"/>
    <property type="chains" value="g=1-117"/>
</dbReference>
<dbReference type="PDB" id="7O7Y">
    <property type="method" value="EM"/>
    <property type="resolution" value="2.20 A"/>
    <property type="chains" value="Bg=1-117"/>
</dbReference>
<dbReference type="PDB" id="7O7Z">
    <property type="method" value="EM"/>
    <property type="resolution" value="2.40 A"/>
    <property type="chains" value="Bg=1-117"/>
</dbReference>
<dbReference type="PDB" id="7O80">
    <property type="method" value="EM"/>
    <property type="resolution" value="2.90 A"/>
    <property type="chains" value="Bg=1-117"/>
</dbReference>
<dbReference type="PDB" id="7O81">
    <property type="method" value="EM"/>
    <property type="resolution" value="3.10 A"/>
    <property type="chains" value="Bg=1-117"/>
</dbReference>
<dbReference type="PDB" id="7OBR">
    <property type="method" value="EM"/>
    <property type="resolution" value="2.80 A"/>
    <property type="chains" value="g=1-117"/>
</dbReference>
<dbReference type="PDB" id="7OYD">
    <property type="method" value="EM"/>
    <property type="resolution" value="2.30 A"/>
    <property type="chains" value="g=1-117"/>
</dbReference>
<dbReference type="PDB" id="7QWQ">
    <property type="method" value="EM"/>
    <property type="resolution" value="2.83 A"/>
    <property type="chains" value="g=1-117"/>
</dbReference>
<dbReference type="PDB" id="7QWR">
    <property type="method" value="EM"/>
    <property type="resolution" value="2.90 A"/>
    <property type="chains" value="g=1-117"/>
</dbReference>
<dbReference type="PDB" id="7QWS">
    <property type="method" value="EM"/>
    <property type="resolution" value="3.40 A"/>
    <property type="chains" value="g=1-117"/>
</dbReference>
<dbReference type="PDB" id="7TM3">
    <property type="method" value="EM"/>
    <property type="resolution" value="3.25 A"/>
    <property type="chains" value="g=1-117"/>
</dbReference>
<dbReference type="PDB" id="7TOQ">
    <property type="method" value="EM"/>
    <property type="resolution" value="3.10 A"/>
    <property type="chains" value="AL34=2-115"/>
</dbReference>
<dbReference type="PDB" id="7TOR">
    <property type="method" value="EM"/>
    <property type="resolution" value="2.90 A"/>
    <property type="chains" value="AL34=2-115"/>
</dbReference>
<dbReference type="PDB" id="7TUT">
    <property type="method" value="EM"/>
    <property type="resolution" value="3.88 A"/>
    <property type="chains" value="g=1-117"/>
</dbReference>
<dbReference type="PDB" id="7UCJ">
    <property type="method" value="EM"/>
    <property type="resolution" value="3.10 A"/>
    <property type="chains" value="g=2-115"/>
</dbReference>
<dbReference type="PDB" id="7UCK">
    <property type="method" value="EM"/>
    <property type="resolution" value="2.80 A"/>
    <property type="chains" value="g=2-115"/>
</dbReference>
<dbReference type="PDB" id="7ZJW">
    <property type="method" value="EM"/>
    <property type="resolution" value="2.80 A"/>
    <property type="chains" value="Lj=1-117"/>
</dbReference>
<dbReference type="PDB" id="7ZJX">
    <property type="method" value="EM"/>
    <property type="resolution" value="3.10 A"/>
    <property type="chains" value="Lj=1-117"/>
</dbReference>
<dbReference type="PDB" id="8B5L">
    <property type="method" value="EM"/>
    <property type="resolution" value="2.86 A"/>
    <property type="chains" value="g=2-115"/>
</dbReference>
<dbReference type="PDB" id="8B6C">
    <property type="method" value="EM"/>
    <property type="resolution" value="2.79 A"/>
    <property type="chains" value="g=2-115"/>
</dbReference>
<dbReference type="PDB" id="8BHF">
    <property type="method" value="EM"/>
    <property type="resolution" value="3.10 A"/>
    <property type="chains" value="T1=2-115"/>
</dbReference>
<dbReference type="PDB" id="8BPO">
    <property type="method" value="EM"/>
    <property type="resolution" value="2.80 A"/>
    <property type="chains" value="f2=1-117"/>
</dbReference>
<dbReference type="PDB" id="8BTK">
    <property type="method" value="EM"/>
    <property type="resolution" value="3.50 A"/>
    <property type="chains" value="Bg=1-117"/>
</dbReference>
<dbReference type="PDB" id="8P2K">
    <property type="method" value="EM"/>
    <property type="resolution" value="2.90 A"/>
    <property type="chains" value="Bg=1-117"/>
</dbReference>
<dbReference type="PDB" id="8RJB">
    <property type="method" value="EM"/>
    <property type="resolution" value="2.69 A"/>
    <property type="chains" value="g=1-116"/>
</dbReference>
<dbReference type="PDB" id="8RJC">
    <property type="method" value="EM"/>
    <property type="resolution" value="2.90 A"/>
    <property type="chains" value="g=1-116"/>
</dbReference>
<dbReference type="PDB" id="8RJD">
    <property type="method" value="EM"/>
    <property type="resolution" value="2.79 A"/>
    <property type="chains" value="g=1-116"/>
</dbReference>
<dbReference type="PDB" id="8SCB">
    <property type="method" value="EM"/>
    <property type="resolution" value="2.50 A"/>
    <property type="chains" value="g=1-117"/>
</dbReference>
<dbReference type="PDB" id="8VFT">
    <property type="method" value="EM"/>
    <property type="resolution" value="3.30 A"/>
    <property type="chains" value="g=1-117"/>
</dbReference>
<dbReference type="PDB" id="9BDL">
    <property type="method" value="EM"/>
    <property type="resolution" value="2.80 A"/>
    <property type="chains" value="AL34=2-115"/>
</dbReference>
<dbReference type="PDB" id="9BDN">
    <property type="method" value="EM"/>
    <property type="resolution" value="3.10 A"/>
    <property type="chains" value="AL34=2-115"/>
</dbReference>
<dbReference type="PDB" id="9BDP">
    <property type="method" value="EM"/>
    <property type="resolution" value="3.70 A"/>
    <property type="chains" value="AL34=2-115"/>
</dbReference>
<dbReference type="PDB" id="9F1B">
    <property type="method" value="EM"/>
    <property type="resolution" value="3.01 A"/>
    <property type="chains" value="Bg=1-115"/>
</dbReference>
<dbReference type="PDB" id="9F1C">
    <property type="method" value="EM"/>
    <property type="resolution" value="3.78 A"/>
    <property type="chains" value="Bg=1-117"/>
</dbReference>
<dbReference type="PDB" id="9F1D">
    <property type="method" value="EM"/>
    <property type="resolution" value="3.26 A"/>
    <property type="chains" value="Bg=1-117"/>
</dbReference>
<dbReference type="PDBsum" id="3JAG"/>
<dbReference type="PDBsum" id="3JAH"/>
<dbReference type="PDBsum" id="3JAI"/>
<dbReference type="PDBsum" id="5LZS"/>
<dbReference type="PDBsum" id="5LZT"/>
<dbReference type="PDBsum" id="5LZU"/>
<dbReference type="PDBsum" id="5LZV"/>
<dbReference type="PDBsum" id="5LZW"/>
<dbReference type="PDBsum" id="6D90"/>
<dbReference type="PDBsum" id="6D9J"/>
<dbReference type="PDBsum" id="6FTG"/>
<dbReference type="PDBsum" id="6FTI"/>
<dbReference type="PDBsum" id="6FTJ"/>
<dbReference type="PDBsum" id="6P5I"/>
<dbReference type="PDBsum" id="6P5J"/>
<dbReference type="PDBsum" id="6P5K"/>
<dbReference type="PDBsum" id="6P5N"/>
<dbReference type="PDBsum" id="6R5Q"/>
<dbReference type="PDBsum" id="6R6G"/>
<dbReference type="PDBsum" id="6R6P"/>
<dbReference type="PDBsum" id="6R7Q"/>
<dbReference type="PDBsum" id="6SGC"/>
<dbReference type="PDBsum" id="6T59"/>
<dbReference type="PDBsum" id="6ZVK"/>
<dbReference type="PDBsum" id="7A01"/>
<dbReference type="PDBsum" id="7MDZ"/>
<dbReference type="PDBsum" id="7NFX"/>
<dbReference type="PDBsum" id="7NWG"/>
<dbReference type="PDBsum" id="7NWH"/>
<dbReference type="PDBsum" id="7NWI"/>
<dbReference type="PDBsum" id="7O7Y"/>
<dbReference type="PDBsum" id="7O7Z"/>
<dbReference type="PDBsum" id="7O80"/>
<dbReference type="PDBsum" id="7O81"/>
<dbReference type="PDBsum" id="7OBR"/>
<dbReference type="PDBsum" id="7OYD"/>
<dbReference type="PDBsum" id="7QWQ"/>
<dbReference type="PDBsum" id="7QWR"/>
<dbReference type="PDBsum" id="7QWS"/>
<dbReference type="PDBsum" id="7TM3"/>
<dbReference type="PDBsum" id="7TOQ"/>
<dbReference type="PDBsum" id="7TOR"/>
<dbReference type="PDBsum" id="7TUT"/>
<dbReference type="PDBsum" id="7UCJ"/>
<dbReference type="PDBsum" id="7UCK"/>
<dbReference type="PDBsum" id="7ZJW"/>
<dbReference type="PDBsum" id="7ZJX"/>
<dbReference type="PDBsum" id="8B5L"/>
<dbReference type="PDBsum" id="8B6C"/>
<dbReference type="PDBsum" id="8BHF"/>
<dbReference type="PDBsum" id="8BPO"/>
<dbReference type="PDBsum" id="8BTK"/>
<dbReference type="PDBsum" id="8P2K"/>
<dbReference type="PDBsum" id="8RJB"/>
<dbReference type="PDBsum" id="8RJC"/>
<dbReference type="PDBsum" id="8RJD"/>
<dbReference type="PDBsum" id="8SCB"/>
<dbReference type="PDBsum" id="8VFT"/>
<dbReference type="PDBsum" id="9BDL"/>
<dbReference type="PDBsum" id="9BDN"/>
<dbReference type="PDBsum" id="9BDP"/>
<dbReference type="PDBsum" id="9F1B"/>
<dbReference type="PDBsum" id="9F1C"/>
<dbReference type="PDBsum" id="9F1D"/>
<dbReference type="EMDB" id="EMD-0099"/>
<dbReference type="EMDB" id="EMD-0100"/>
<dbReference type="EMDB" id="EMD-0192"/>
<dbReference type="EMDB" id="EMD-0194"/>
<dbReference type="EMDB" id="EMD-0195"/>
<dbReference type="EMDB" id="EMD-0197"/>
<dbReference type="EMDB" id="EMD-10181"/>
<dbReference type="EMDB" id="EMD-10380"/>
<dbReference type="EMDB" id="EMD-11459"/>
<dbReference type="EMDB" id="EMD-11590"/>
<dbReference type="EMDB" id="EMD-12303"/>
<dbReference type="EMDB" id="EMD-12631"/>
<dbReference type="EMDB" id="EMD-12632"/>
<dbReference type="EMDB" id="EMD-12633"/>
<dbReference type="EMDB" id="EMD-12756"/>
<dbReference type="EMDB" id="EMD-12757"/>
<dbReference type="EMDB" id="EMD-12758"/>
<dbReference type="EMDB" id="EMD-12759"/>
<dbReference type="EMDB" id="EMD-12801"/>
<dbReference type="EMDB" id="EMD-13114"/>
<dbReference type="EMDB" id="EMD-14191"/>
<dbReference type="EMDB" id="EMD-14192"/>
<dbReference type="EMDB" id="EMD-14193"/>
<dbReference type="EMDB" id="EMD-14751"/>
<dbReference type="EMDB" id="EMD-14752"/>
<dbReference type="EMDB" id="EMD-15860"/>
<dbReference type="EMDB" id="EMD-15863"/>
<dbReference type="EMDB" id="EMD-16052"/>
<dbReference type="EMDB" id="EMD-16155"/>
<dbReference type="EMDB" id="EMD-16232"/>
<dbReference type="EMDB" id="EMD-17367"/>
<dbReference type="EMDB" id="EMD-19195"/>
<dbReference type="EMDB" id="EMD-19197"/>
<dbReference type="EMDB" id="EMD-19198"/>
<dbReference type="EMDB" id="EMD-20255"/>
<dbReference type="EMDB" id="EMD-20256"/>
<dbReference type="EMDB" id="EMD-20257"/>
<dbReference type="EMDB" id="EMD-20258"/>
<dbReference type="EMDB" id="EMD-23785"/>
<dbReference type="EMDB" id="EMD-25994"/>
<dbReference type="EMDB" id="EMD-26035"/>
<dbReference type="EMDB" id="EMD-26036"/>
<dbReference type="EMDB" id="EMD-26133"/>
<dbReference type="EMDB" id="EMD-26444"/>
<dbReference type="EMDB" id="EMD-26445"/>
<dbReference type="EMDB" id="EMD-40344"/>
<dbReference type="EMDB" id="EMD-4130"/>
<dbReference type="EMDB" id="EMD-4131"/>
<dbReference type="EMDB" id="EMD-4132"/>
<dbReference type="EMDB" id="EMD-4133"/>
<dbReference type="EMDB" id="EMD-4134"/>
<dbReference type="EMDB" id="EMD-4135"/>
<dbReference type="EMDB" id="EMD-4136"/>
<dbReference type="EMDB" id="EMD-4137"/>
<dbReference type="EMDB" id="EMD-4300"/>
<dbReference type="EMDB" id="EMD-4315"/>
<dbReference type="EMDB" id="EMD-4316"/>
<dbReference type="EMDB" id="EMD-4317"/>
<dbReference type="EMDB" id="EMD-43189"/>
<dbReference type="EMDB" id="EMD-44461"/>
<dbReference type="EMDB" id="EMD-44463"/>
<dbReference type="EMDB" id="EMD-44464"/>
<dbReference type="EMDB" id="EMD-4729"/>
<dbReference type="EMDB" id="EMD-4735"/>
<dbReference type="EMDB" id="EMD-4737"/>
<dbReference type="EMDB" id="EMD-4745"/>
<dbReference type="EMDB" id="EMD-50124"/>
<dbReference type="EMDB" id="EMD-50125"/>
<dbReference type="EMDB" id="EMD-50126"/>
<dbReference type="SMR" id="G1TXG5"/>
<dbReference type="FunCoup" id="G1TXG5">
    <property type="interactions" value="1415"/>
</dbReference>
<dbReference type="IntAct" id="G1TXG5">
    <property type="interactions" value="1"/>
</dbReference>
<dbReference type="STRING" id="9986.ENSOCUP00000021767"/>
<dbReference type="PaxDb" id="9986-ENSOCUP00000025964"/>
<dbReference type="Ensembl" id="ENSOCUT00000025210.2">
    <property type="protein sequence ID" value="ENSOCUP00000021767.2"/>
    <property type="gene ID" value="ENSOCUG00000025758.2"/>
</dbReference>
<dbReference type="GeneID" id="100339329"/>
<dbReference type="GeneID" id="100354714"/>
<dbReference type="KEGG" id="ocu:100354714"/>
<dbReference type="eggNOG" id="KOG1790">
    <property type="taxonomic scope" value="Eukaryota"/>
</dbReference>
<dbReference type="GeneTree" id="ENSGT00390000008294"/>
<dbReference type="HOGENOM" id="CLU_118652_0_1_1"/>
<dbReference type="InParanoid" id="G1TXG5"/>
<dbReference type="OrthoDB" id="277449at2759"/>
<dbReference type="TreeFam" id="TF314326"/>
<dbReference type="Proteomes" id="UP000001811">
    <property type="component" value="Chromosome 20"/>
</dbReference>
<dbReference type="Bgee" id="ENSOCUG00000027099">
    <property type="expression patterns" value="Expressed in aorta and 15 other cell types or tissues"/>
</dbReference>
<dbReference type="GO" id="GO:0005829">
    <property type="term" value="C:cytosol"/>
    <property type="evidence" value="ECO:0007669"/>
    <property type="project" value="UniProtKB-SubCell"/>
</dbReference>
<dbReference type="GO" id="GO:0005783">
    <property type="term" value="C:endoplasmic reticulum"/>
    <property type="evidence" value="ECO:0007669"/>
    <property type="project" value="UniProtKB-SubCell"/>
</dbReference>
<dbReference type="GO" id="GO:1990904">
    <property type="term" value="C:ribonucleoprotein complex"/>
    <property type="evidence" value="ECO:0007669"/>
    <property type="project" value="UniProtKB-KW"/>
</dbReference>
<dbReference type="GO" id="GO:0005840">
    <property type="term" value="C:ribosome"/>
    <property type="evidence" value="ECO:0007669"/>
    <property type="project" value="UniProtKB-KW"/>
</dbReference>
<dbReference type="GO" id="GO:0003735">
    <property type="term" value="F:structural constituent of ribosome"/>
    <property type="evidence" value="ECO:0007669"/>
    <property type="project" value="InterPro"/>
</dbReference>
<dbReference type="GO" id="GO:0006412">
    <property type="term" value="P:translation"/>
    <property type="evidence" value="ECO:0007669"/>
    <property type="project" value="InterPro"/>
</dbReference>
<dbReference type="Gene3D" id="6.20.340.10">
    <property type="match status" value="1"/>
</dbReference>
<dbReference type="Gene3D" id="6.20.370.70">
    <property type="match status" value="1"/>
</dbReference>
<dbReference type="InterPro" id="IPR008195">
    <property type="entry name" value="Ribosomal_eL34"/>
</dbReference>
<dbReference type="InterPro" id="IPR038562">
    <property type="entry name" value="Ribosomal_eL34_C_sf"/>
</dbReference>
<dbReference type="InterPro" id="IPR018065">
    <property type="entry name" value="Ribosomal_eL34_CS"/>
</dbReference>
<dbReference type="PANTHER" id="PTHR46595">
    <property type="entry name" value="60S RIBOSOMAL PROTEIN L34"/>
    <property type="match status" value="1"/>
</dbReference>
<dbReference type="Pfam" id="PF01199">
    <property type="entry name" value="Ribosomal_L34e"/>
    <property type="match status" value="1"/>
</dbReference>
<dbReference type="PRINTS" id="PR01250">
    <property type="entry name" value="RIBOSOMALL34"/>
</dbReference>
<dbReference type="PROSITE" id="PS01145">
    <property type="entry name" value="RIBOSOMAL_L34E"/>
    <property type="match status" value="1"/>
</dbReference>
<reference key="1">
    <citation type="journal article" date="2011" name="Nature">
        <title>A high-resolution map of human evolutionary constraint using 29 mammals.</title>
        <authorList>
            <person name="Lindblad-Toh K."/>
            <person name="Garber M."/>
            <person name="Zuk O."/>
            <person name="Lin M.F."/>
            <person name="Parker B.J."/>
            <person name="Washietl S."/>
            <person name="Kheradpour P."/>
            <person name="Ernst J."/>
            <person name="Jordan G."/>
            <person name="Mauceli E."/>
            <person name="Ward L.D."/>
            <person name="Lowe C.B."/>
            <person name="Holloway A.K."/>
            <person name="Clamp M."/>
            <person name="Gnerre S."/>
            <person name="Alfoldi J."/>
            <person name="Beal K."/>
            <person name="Chang J."/>
            <person name="Clawson H."/>
            <person name="Cuff J."/>
            <person name="Di Palma F."/>
            <person name="Fitzgerald S."/>
            <person name="Flicek P."/>
            <person name="Guttman M."/>
            <person name="Hubisz M.J."/>
            <person name="Jaffe D.B."/>
            <person name="Jungreis I."/>
            <person name="Kent W.J."/>
            <person name="Kostka D."/>
            <person name="Lara M."/>
            <person name="Martins A.L."/>
            <person name="Massingham T."/>
            <person name="Moltke I."/>
            <person name="Raney B.J."/>
            <person name="Rasmussen M.D."/>
            <person name="Robinson J."/>
            <person name="Stark A."/>
            <person name="Vilella A.J."/>
            <person name="Wen J."/>
            <person name="Xie X."/>
            <person name="Zody M.C."/>
            <person name="Baldwin J."/>
            <person name="Bloom T."/>
            <person name="Chin C.W."/>
            <person name="Heiman D."/>
            <person name="Nicol R."/>
            <person name="Nusbaum C."/>
            <person name="Young S."/>
            <person name="Wilkinson J."/>
            <person name="Worley K.C."/>
            <person name="Kovar C.L."/>
            <person name="Muzny D.M."/>
            <person name="Gibbs R.A."/>
            <person name="Cree A."/>
            <person name="Dihn H.H."/>
            <person name="Fowler G."/>
            <person name="Jhangiani S."/>
            <person name="Joshi V."/>
            <person name="Lee S."/>
            <person name="Lewis L.R."/>
            <person name="Nazareth L.V."/>
            <person name="Okwuonu G."/>
            <person name="Santibanez J."/>
            <person name="Warren W.C."/>
            <person name="Mardis E.R."/>
            <person name="Weinstock G.M."/>
            <person name="Wilson R.K."/>
            <person name="Delehaunty K."/>
            <person name="Dooling D."/>
            <person name="Fronik C."/>
            <person name="Fulton L."/>
            <person name="Fulton B."/>
            <person name="Graves T."/>
            <person name="Minx P."/>
            <person name="Sodergren E."/>
            <person name="Birney E."/>
            <person name="Margulies E.H."/>
            <person name="Herrero J."/>
            <person name="Green E.D."/>
            <person name="Haussler D."/>
            <person name="Siepel A."/>
            <person name="Goldman N."/>
            <person name="Pollard K.S."/>
            <person name="Pedersen J.S."/>
            <person name="Lander E.S."/>
            <person name="Kellis M."/>
        </authorList>
    </citation>
    <scope>NUCLEOTIDE SEQUENCE [LARGE SCALE GENOMIC DNA]</scope>
    <source>
        <strain>Thorbecke</strain>
    </source>
</reference>
<reference evidence="15 16" key="2">
    <citation type="journal article" date="2015" name="Nature">
        <title>Structural basis for stop codon recognition in eukaryotes.</title>
        <authorList>
            <person name="Brown A."/>
            <person name="Shao S."/>
            <person name="Murray J."/>
            <person name="Hegde R.S."/>
            <person name="Ramakrishnan V."/>
        </authorList>
    </citation>
    <scope>STRUCTURE BY ELECTRON MICROSCOPY (3.45 ANGSTROMS) OF RIBOSOME</scope>
    <scope>FUNCTION</scope>
    <scope>SUBCELLULAR LOCATION</scope>
    <scope>SUBUNIT</scope>
</reference>
<reference evidence="17" key="3">
    <citation type="journal article" date="2016" name="Cell">
        <title>Decoding mammalian ribosome-mRNA states by translational GTPase complexes.</title>
        <authorList>
            <person name="Shao S."/>
            <person name="Murray J."/>
            <person name="Brown A."/>
            <person name="Taunton J."/>
            <person name="Ramakrishnan V."/>
            <person name="Hegde R.S."/>
        </authorList>
    </citation>
    <scope>STRUCTURE BY ELECTRON MICROSCOPY (3.31 ANGSTROMS) OF RIBOSOME</scope>
    <scope>FUNCTION</scope>
    <scope>SUBCELLULAR LOCATION</scope>
    <scope>SUBUNIT</scope>
</reference>
<reference evidence="18" key="4">
    <citation type="journal article" date="2018" name="Elife">
        <title>Dual tRNA mimicry in the Cricket paralysis virus IRES uncovers an unexpected similarity with the Hepatitis C Virus IRES.</title>
        <authorList>
            <person name="Pisareva V.P."/>
            <person name="Pisarev A.V."/>
            <person name="Fernandez I.S."/>
        </authorList>
    </citation>
    <scope>STRUCTURE BY ELECTRON MICROSCOPY (3.20 ANGSTROMS) OF RIBOSOME</scope>
    <scope>SUBUNIT</scope>
    <scope>SUBCELLULAR LOCATION</scope>
</reference>
<reference evidence="21 22" key="5">
    <citation type="journal article" date="2019" name="Elife">
        <title>Structural and mutational analysis of the ribosome-arresting human XBP1u.</title>
        <authorList>
            <person name="Shanmuganathan V."/>
            <person name="Schiller N."/>
            <person name="Magoulopoulou A."/>
            <person name="Cheng J."/>
            <person name="Braunger K."/>
            <person name="Cymer F."/>
            <person name="Berninghausen O."/>
            <person name="Beatrix B."/>
            <person name="Kohno K."/>
            <person name="von Heijne G."/>
            <person name="Beckmann R."/>
        </authorList>
    </citation>
    <scope>STRUCTURE BY ELECTRON MICROSCOPY (3.00 ANGSTROMS) OF RIBOSOME</scope>
    <scope>SUBCELLULAR LOCATION</scope>
    <scope>SUBUNIT</scope>
</reference>
<reference evidence="19 20" key="6">
    <citation type="journal article" date="2019" name="EMBO J.">
        <title>The Israeli acute paralysis virus IRES captures host ribosomes by mimicking a ribosomal state with hybrid tRNAs.</title>
        <authorList>
            <person name="Acosta-Reyes F."/>
            <person name="Neupane R."/>
            <person name="Frank J."/>
            <person name="Fernandez I.S."/>
        </authorList>
    </citation>
    <scope>STRUCTURE BY ELECTRON MICROSCOPY (3.10 ANGSTROMS) OF RIBOSOME</scope>
    <scope>SUBUNIT</scope>
    <scope>SUBCELLULAR LOCATION</scope>
</reference>
<reference evidence="23" key="7">
    <citation type="journal article" date="2019" name="Nat. Struct. Mol. Biol.">
        <title>Mechanism of ribosome stalling during translation of a poly(A) tail.</title>
        <authorList>
            <person name="Chandrasekaran V."/>
            <person name="Juszkiewicz S."/>
            <person name="Choi J."/>
            <person name="Puglisi J.D."/>
            <person name="Brown A."/>
            <person name="Shao S."/>
            <person name="Ramakrishnan V."/>
            <person name="Hegde R.S."/>
        </authorList>
    </citation>
    <scope>STRUCTURE BY ELECTRON MICROSCOPY (2.80 ANGSTROMS) OF RIBOSOME</scope>
    <scope>SUBCELLULAR LOCATION</scope>
    <scope>SUBUNIT</scope>
</reference>
<reference evidence="24 25" key="8">
    <citation type="journal article" date="2020" name="Cell Rep.">
        <title>The Halastavi arva virus intergenic region IRES promotes translation by the simplest possible initiation mechanism.</title>
        <authorList>
            <person name="Abaeva I.S."/>
            <person name="Vicens Q."/>
            <person name="Bochler A."/>
            <person name="Soufari H."/>
            <person name="Simonetti A."/>
            <person name="Pestova T.V."/>
            <person name="Hashem Y."/>
            <person name="Hellen C.U.T."/>
        </authorList>
    </citation>
    <scope>STRUCTURE BY ELECTRON MICROSCOPY (3.49 ANGSTROMS) OF RIBOSOME</scope>
    <scope>SUBCELLULAR LOCATION</scope>
    <scope>SUBUNIT</scope>
</reference>
<reference evidence="27 28" key="9">
    <citation type="journal article" date="2022" name="Mol. Cell">
        <title>Direct epitranscriptomic regulation of mammalian translation initiation through N4-acetylcytidine.</title>
        <authorList>
            <person name="Arango D."/>
            <person name="Sturgill D."/>
            <person name="Yang R."/>
            <person name="Kanai T."/>
            <person name="Bauer P."/>
            <person name="Roy J."/>
            <person name="Wang Z."/>
            <person name="Hosogane M."/>
            <person name="Schiffers S."/>
            <person name="Oberdoerffer S."/>
        </authorList>
    </citation>
    <scope>STRUCTURE BY ELECTRON MICROSCOPY (2.80 ANGSTROMS) OF RIBOSOME</scope>
    <scope>SUBCELLULAR LOCATION</scope>
    <scope>SUBUNIT</scope>
</reference>
<reference evidence="29 30" key="10">
    <citation type="journal article" date="2022" name="Science">
        <title>Structure of the mammalian ribosome as it decodes the selenocysteine UGA codon.</title>
        <authorList>
            <person name="Hilal T."/>
            <person name="Killam B.Y."/>
            <person name="Grozdanovic M."/>
            <person name="Dobosz-Bartoszek M."/>
            <person name="Loerke J."/>
            <person name="Buerger J."/>
            <person name="Mielke T."/>
            <person name="Copeland P.R."/>
            <person name="Simonovic M."/>
            <person name="Spahn C.M.T."/>
        </authorList>
    </citation>
    <scope>STRUCTURE BY ELECTRON MICROSCOPY (2.80 ANGSTROMS) OF RIBOSOME</scope>
    <scope>SUBCELLULAR LOCATION</scope>
    <scope>SUBUNIT</scope>
</reference>
<reference evidence="26" key="11">
    <citation type="journal article" date="2023" name="Nature">
        <title>A molecular network of conserved factors keeps ribosomes dormant in the egg.</title>
        <authorList>
            <person name="Leesch F."/>
            <person name="Lorenzo-Orts L."/>
            <person name="Pribitzer C."/>
            <person name="Grishkovskaya I."/>
            <person name="Roehsner J."/>
            <person name="Chugunova A."/>
            <person name="Matzinger M."/>
            <person name="Roitinger E."/>
            <person name="Belacic K."/>
            <person name="Kandolf S."/>
            <person name="Lin T.Y."/>
            <person name="Mechtler K."/>
            <person name="Meinhart A."/>
            <person name="Haselbach D."/>
            <person name="Pauli A."/>
        </authorList>
    </citation>
    <scope>STRUCTURE BY ELECTRON MICROSCOPY (2.30 ANGSTROMS) OF RIBOSOME</scope>
    <scope>SUBCELLULAR LOCATION</scope>
    <scope>SUBUNIT</scope>
</reference>
<protein>
    <recommendedName>
        <fullName>Large ribosomal subunit protein eL34</fullName>
    </recommendedName>
    <alternativeName>
        <fullName>60S ribosomal protein L34</fullName>
    </alternativeName>
</protein>
<feature type="initiator methionine" description="Removed" evidence="1">
    <location>
        <position position="1"/>
    </location>
</feature>
<feature type="chain" id="PRO_0000460123" description="Large ribosomal subunit protein eL34">
    <location>
        <begin position="2"/>
        <end position="117"/>
    </location>
</feature>
<feature type="modified residue" description="Phosphoserine" evidence="1">
    <location>
        <position position="12"/>
    </location>
</feature>
<feature type="modified residue" description="N6-acetyllysine" evidence="1">
    <location>
        <position position="36"/>
    </location>
</feature>
<feature type="modified residue" description="N6-acetyllysine" evidence="3">
    <location>
        <position position="43"/>
    </location>
</feature>
<feature type="cross-link" description="Glycyl lysine isopeptide (Lys-Gly) (interchain with G-Cter in SUMO2)" evidence="1">
    <location>
        <position position="108"/>
    </location>
</feature>
<proteinExistence type="evidence at protein level"/>
<accession>G1TXG5</accession>
<accession>G1U945</accession>
<name>RL34_RABIT</name>
<evidence type="ECO:0000250" key="1">
    <source>
        <dbReference type="UniProtKB" id="P49207"/>
    </source>
</evidence>
<evidence type="ECO:0000250" key="2">
    <source>
        <dbReference type="UniProtKB" id="Q29223"/>
    </source>
</evidence>
<evidence type="ECO:0000250" key="3">
    <source>
        <dbReference type="UniProtKB" id="Q9D1R9"/>
    </source>
</evidence>
<evidence type="ECO:0000269" key="4">
    <source>
    </source>
</evidence>
<evidence type="ECO:0000269" key="5">
    <source>
    </source>
</evidence>
<evidence type="ECO:0000269" key="6">
    <source>
    </source>
</evidence>
<evidence type="ECO:0000269" key="7">
    <source>
    </source>
</evidence>
<evidence type="ECO:0000269" key="8">
    <source>
    </source>
</evidence>
<evidence type="ECO:0000269" key="9">
    <source>
    </source>
</evidence>
<evidence type="ECO:0000269" key="10">
    <source>
    </source>
</evidence>
<evidence type="ECO:0000269" key="11">
    <source>
    </source>
</evidence>
<evidence type="ECO:0000269" key="12">
    <source>
    </source>
</evidence>
<evidence type="ECO:0000269" key="13">
    <source>
    </source>
</evidence>
<evidence type="ECO:0000305" key="14"/>
<evidence type="ECO:0007744" key="15">
    <source>
        <dbReference type="PDB" id="3JAG"/>
    </source>
</evidence>
<evidence type="ECO:0007744" key="16">
    <source>
        <dbReference type="PDB" id="3JAH"/>
    </source>
</evidence>
<evidence type="ECO:0007744" key="17">
    <source>
        <dbReference type="PDB" id="5LZU"/>
    </source>
</evidence>
<evidence type="ECO:0007744" key="18">
    <source>
        <dbReference type="PDB" id="6D90"/>
    </source>
</evidence>
<evidence type="ECO:0007744" key="19">
    <source>
        <dbReference type="PDB" id="6D9J"/>
    </source>
</evidence>
<evidence type="ECO:0007744" key="20">
    <source>
        <dbReference type="PDB" id="6FTI"/>
    </source>
</evidence>
<evidence type="ECO:0007744" key="21">
    <source>
        <dbReference type="PDB" id="6R5Q"/>
    </source>
</evidence>
<evidence type="ECO:0007744" key="22">
    <source>
        <dbReference type="PDB" id="6R6G"/>
    </source>
</evidence>
<evidence type="ECO:0007744" key="23">
    <source>
        <dbReference type="PDB" id="6SGC"/>
    </source>
</evidence>
<evidence type="ECO:0007744" key="24">
    <source>
        <dbReference type="PDB" id="6ZVK"/>
    </source>
</evidence>
<evidence type="ECO:0007744" key="25">
    <source>
        <dbReference type="PDB" id="7A01"/>
    </source>
</evidence>
<evidence type="ECO:0007744" key="26">
    <source>
        <dbReference type="PDB" id="7OYD"/>
    </source>
</evidence>
<evidence type="ECO:0007744" key="27">
    <source>
        <dbReference type="PDB" id="7UCJ"/>
    </source>
</evidence>
<evidence type="ECO:0007744" key="28">
    <source>
        <dbReference type="PDB" id="7UCK"/>
    </source>
</evidence>
<evidence type="ECO:0007744" key="29">
    <source>
        <dbReference type="PDB" id="7ZJW"/>
    </source>
</evidence>
<evidence type="ECO:0007744" key="30">
    <source>
        <dbReference type="PDB" id="7ZJX"/>
    </source>
</evidence>